<reference key="1">
    <citation type="submission" date="2007-08" db="EMBL/GenBank/DDBJ databases">
        <title>Complete sequence of Shewanella sediminis HAW-EB3.</title>
        <authorList>
            <consortium name="US DOE Joint Genome Institute"/>
            <person name="Copeland A."/>
            <person name="Lucas S."/>
            <person name="Lapidus A."/>
            <person name="Barry K."/>
            <person name="Glavina del Rio T."/>
            <person name="Dalin E."/>
            <person name="Tice H."/>
            <person name="Pitluck S."/>
            <person name="Chertkov O."/>
            <person name="Brettin T."/>
            <person name="Bruce D."/>
            <person name="Detter J.C."/>
            <person name="Han C."/>
            <person name="Schmutz J."/>
            <person name="Larimer F."/>
            <person name="Land M."/>
            <person name="Hauser L."/>
            <person name="Kyrpides N."/>
            <person name="Kim E."/>
            <person name="Zhao J.-S."/>
            <person name="Richardson P."/>
        </authorList>
    </citation>
    <scope>NUCLEOTIDE SEQUENCE [LARGE SCALE GENOMIC DNA]</scope>
    <source>
        <strain>HAW-EB3</strain>
    </source>
</reference>
<protein>
    <recommendedName>
        <fullName evidence="1">3-phosphoshikimate 1-carboxyvinyltransferase</fullName>
        <ecNumber evidence="1">2.5.1.19</ecNumber>
    </recommendedName>
    <alternativeName>
        <fullName evidence="1">5-enolpyruvylshikimate-3-phosphate synthase</fullName>
        <shortName evidence="1">EPSP synthase</shortName>
        <shortName evidence="1">EPSPS</shortName>
    </alternativeName>
</protein>
<proteinExistence type="inferred from homology"/>
<evidence type="ECO:0000255" key="1">
    <source>
        <dbReference type="HAMAP-Rule" id="MF_00210"/>
    </source>
</evidence>
<name>AROA_SHESH</name>
<dbReference type="EC" id="2.5.1.19" evidence="1"/>
<dbReference type="EMBL" id="CP000821">
    <property type="protein sequence ID" value="ABV36909.1"/>
    <property type="molecule type" value="Genomic_DNA"/>
</dbReference>
<dbReference type="RefSeq" id="WP_012142644.1">
    <property type="nucleotide sequence ID" value="NC_009831.1"/>
</dbReference>
<dbReference type="SMR" id="A8FVN6"/>
<dbReference type="STRING" id="425104.Ssed_2300"/>
<dbReference type="KEGG" id="sse:Ssed_2300"/>
<dbReference type="eggNOG" id="COG0128">
    <property type="taxonomic scope" value="Bacteria"/>
</dbReference>
<dbReference type="HOGENOM" id="CLU_024321_0_0_6"/>
<dbReference type="OrthoDB" id="9809920at2"/>
<dbReference type="UniPathway" id="UPA00053">
    <property type="reaction ID" value="UER00089"/>
</dbReference>
<dbReference type="Proteomes" id="UP000002015">
    <property type="component" value="Chromosome"/>
</dbReference>
<dbReference type="GO" id="GO:0005737">
    <property type="term" value="C:cytoplasm"/>
    <property type="evidence" value="ECO:0007669"/>
    <property type="project" value="UniProtKB-SubCell"/>
</dbReference>
<dbReference type="GO" id="GO:0003866">
    <property type="term" value="F:3-phosphoshikimate 1-carboxyvinyltransferase activity"/>
    <property type="evidence" value="ECO:0007669"/>
    <property type="project" value="UniProtKB-UniRule"/>
</dbReference>
<dbReference type="GO" id="GO:0008652">
    <property type="term" value="P:amino acid biosynthetic process"/>
    <property type="evidence" value="ECO:0007669"/>
    <property type="project" value="UniProtKB-KW"/>
</dbReference>
<dbReference type="GO" id="GO:0009073">
    <property type="term" value="P:aromatic amino acid family biosynthetic process"/>
    <property type="evidence" value="ECO:0007669"/>
    <property type="project" value="UniProtKB-KW"/>
</dbReference>
<dbReference type="GO" id="GO:0009423">
    <property type="term" value="P:chorismate biosynthetic process"/>
    <property type="evidence" value="ECO:0007669"/>
    <property type="project" value="UniProtKB-UniRule"/>
</dbReference>
<dbReference type="CDD" id="cd01556">
    <property type="entry name" value="EPSP_synthase"/>
    <property type="match status" value="1"/>
</dbReference>
<dbReference type="FunFam" id="3.65.10.10:FF:000003">
    <property type="entry name" value="3-phosphoshikimate 1-carboxyvinyltransferase"/>
    <property type="match status" value="1"/>
</dbReference>
<dbReference type="FunFam" id="3.65.10.10:FF:000004">
    <property type="entry name" value="3-phosphoshikimate 1-carboxyvinyltransferase"/>
    <property type="match status" value="1"/>
</dbReference>
<dbReference type="Gene3D" id="3.65.10.10">
    <property type="entry name" value="Enolpyruvate transferase domain"/>
    <property type="match status" value="2"/>
</dbReference>
<dbReference type="HAMAP" id="MF_00210">
    <property type="entry name" value="EPSP_synth"/>
    <property type="match status" value="1"/>
</dbReference>
<dbReference type="InterPro" id="IPR001986">
    <property type="entry name" value="Enolpyruvate_Tfrase_dom"/>
</dbReference>
<dbReference type="InterPro" id="IPR036968">
    <property type="entry name" value="Enolpyruvate_Tfrase_sf"/>
</dbReference>
<dbReference type="InterPro" id="IPR006264">
    <property type="entry name" value="EPSP_synthase"/>
</dbReference>
<dbReference type="InterPro" id="IPR023193">
    <property type="entry name" value="EPSP_synthase_CS"/>
</dbReference>
<dbReference type="InterPro" id="IPR013792">
    <property type="entry name" value="RNA3'P_cycl/enolpyr_Trfase_a/b"/>
</dbReference>
<dbReference type="NCBIfam" id="TIGR01356">
    <property type="entry name" value="aroA"/>
    <property type="match status" value="1"/>
</dbReference>
<dbReference type="PANTHER" id="PTHR21090">
    <property type="entry name" value="AROM/DEHYDROQUINATE SYNTHASE"/>
    <property type="match status" value="1"/>
</dbReference>
<dbReference type="PANTHER" id="PTHR21090:SF5">
    <property type="entry name" value="PENTAFUNCTIONAL AROM POLYPEPTIDE"/>
    <property type="match status" value="1"/>
</dbReference>
<dbReference type="Pfam" id="PF00275">
    <property type="entry name" value="EPSP_synthase"/>
    <property type="match status" value="1"/>
</dbReference>
<dbReference type="PIRSF" id="PIRSF000505">
    <property type="entry name" value="EPSPS"/>
    <property type="match status" value="1"/>
</dbReference>
<dbReference type="SUPFAM" id="SSF55205">
    <property type="entry name" value="EPT/RTPC-like"/>
    <property type="match status" value="1"/>
</dbReference>
<dbReference type="PROSITE" id="PS00104">
    <property type="entry name" value="EPSP_SYNTHASE_1"/>
    <property type="match status" value="1"/>
</dbReference>
<dbReference type="PROSITE" id="PS00885">
    <property type="entry name" value="EPSP_SYNTHASE_2"/>
    <property type="match status" value="1"/>
</dbReference>
<comment type="function">
    <text evidence="1">Catalyzes the transfer of the enolpyruvyl moiety of phosphoenolpyruvate (PEP) to the 5-hydroxyl of shikimate-3-phosphate (S3P) to produce enolpyruvyl shikimate-3-phosphate and inorganic phosphate.</text>
</comment>
<comment type="catalytic activity">
    <reaction evidence="1">
        <text>3-phosphoshikimate + phosphoenolpyruvate = 5-O-(1-carboxyvinyl)-3-phosphoshikimate + phosphate</text>
        <dbReference type="Rhea" id="RHEA:21256"/>
        <dbReference type="ChEBI" id="CHEBI:43474"/>
        <dbReference type="ChEBI" id="CHEBI:57701"/>
        <dbReference type="ChEBI" id="CHEBI:58702"/>
        <dbReference type="ChEBI" id="CHEBI:145989"/>
        <dbReference type="EC" id="2.5.1.19"/>
    </reaction>
    <physiologicalReaction direction="left-to-right" evidence="1">
        <dbReference type="Rhea" id="RHEA:21257"/>
    </physiologicalReaction>
</comment>
<comment type="pathway">
    <text evidence="1">Metabolic intermediate biosynthesis; chorismate biosynthesis; chorismate from D-erythrose 4-phosphate and phosphoenolpyruvate: step 6/7.</text>
</comment>
<comment type="subunit">
    <text evidence="1">Monomer.</text>
</comment>
<comment type="subcellular location">
    <subcellularLocation>
        <location evidence="1">Cytoplasm</location>
    </subcellularLocation>
</comment>
<comment type="similarity">
    <text evidence="1">Belongs to the EPSP synthase family.</text>
</comment>
<gene>
    <name evidence="1" type="primary">aroA</name>
    <name type="ordered locus">Ssed_2300</name>
</gene>
<organism>
    <name type="scientific">Shewanella sediminis (strain HAW-EB3)</name>
    <dbReference type="NCBI Taxonomy" id="425104"/>
    <lineage>
        <taxon>Bacteria</taxon>
        <taxon>Pseudomonadati</taxon>
        <taxon>Pseudomonadota</taxon>
        <taxon>Gammaproteobacteria</taxon>
        <taxon>Alteromonadales</taxon>
        <taxon>Shewanellaceae</taxon>
        <taxon>Shewanella</taxon>
    </lineage>
</organism>
<keyword id="KW-0028">Amino-acid biosynthesis</keyword>
<keyword id="KW-0057">Aromatic amino acid biosynthesis</keyword>
<keyword id="KW-0963">Cytoplasm</keyword>
<keyword id="KW-1185">Reference proteome</keyword>
<keyword id="KW-0808">Transferase</keyword>
<sequence length="426" mass="45831">MKQLRLEPINKVQGTINIPGSKSISNRALLLATLAKGTTTLTNLLDSDDIRYMLASLKQLGVNYRLSNDNTVCELEGIGAPLNSEQAQTLFLGNAGTAMRPLCAALTLGHGEFTLTGEPRMEERPIGDLVDALRQLGANVTYLKNDGFPPLTINATGLDAGEVEIAGDLSSQFLTALLMVAPLATGDVNIKIKGELVSKPYIDITIALMAQFGVQVVNHSYERFEIKAGQGYVSPGKVLVEGDASSASYFLAAGAIKGGEVKVTGVGRMSIQGDVKFADVLEKMGADIEWGDDYIISRGSTLKAVDLDMNHIPDAAMTIATAALFATGTTHIRNIYNWRIKETDRLAAMATELRKVGAIVDEGHDYISITPPTKPHTADIDTYNDHRMAMCFSMLAFADCGITINDPDCTSKTFPDYFNQFAALAQ</sequence>
<feature type="chain" id="PRO_1000078000" description="3-phosphoshikimate 1-carboxyvinyltransferase">
    <location>
        <begin position="1"/>
        <end position="426"/>
    </location>
</feature>
<feature type="active site" description="Proton acceptor" evidence="1">
    <location>
        <position position="314"/>
    </location>
</feature>
<feature type="binding site" evidence="1">
    <location>
        <position position="22"/>
    </location>
    <ligand>
        <name>3-phosphoshikimate</name>
        <dbReference type="ChEBI" id="CHEBI:145989"/>
    </ligand>
</feature>
<feature type="binding site" evidence="1">
    <location>
        <position position="22"/>
    </location>
    <ligand>
        <name>phosphoenolpyruvate</name>
        <dbReference type="ChEBI" id="CHEBI:58702"/>
    </ligand>
</feature>
<feature type="binding site" evidence="1">
    <location>
        <position position="23"/>
    </location>
    <ligand>
        <name>3-phosphoshikimate</name>
        <dbReference type="ChEBI" id="CHEBI:145989"/>
    </ligand>
</feature>
<feature type="binding site" evidence="1">
    <location>
        <position position="27"/>
    </location>
    <ligand>
        <name>3-phosphoshikimate</name>
        <dbReference type="ChEBI" id="CHEBI:145989"/>
    </ligand>
</feature>
<feature type="binding site" evidence="1">
    <location>
        <position position="96"/>
    </location>
    <ligand>
        <name>phosphoenolpyruvate</name>
        <dbReference type="ChEBI" id="CHEBI:58702"/>
    </ligand>
</feature>
<feature type="binding site" evidence="1">
    <location>
        <position position="124"/>
    </location>
    <ligand>
        <name>phosphoenolpyruvate</name>
        <dbReference type="ChEBI" id="CHEBI:58702"/>
    </ligand>
</feature>
<feature type="binding site" evidence="1">
    <location>
        <position position="170"/>
    </location>
    <ligand>
        <name>3-phosphoshikimate</name>
        <dbReference type="ChEBI" id="CHEBI:145989"/>
    </ligand>
</feature>
<feature type="binding site" evidence="1">
    <location>
        <position position="171"/>
    </location>
    <ligand>
        <name>3-phosphoshikimate</name>
        <dbReference type="ChEBI" id="CHEBI:145989"/>
    </ligand>
</feature>
<feature type="binding site" evidence="1">
    <location>
        <position position="172"/>
    </location>
    <ligand>
        <name>3-phosphoshikimate</name>
        <dbReference type="ChEBI" id="CHEBI:145989"/>
    </ligand>
</feature>
<feature type="binding site" evidence="1">
    <location>
        <position position="172"/>
    </location>
    <ligand>
        <name>phosphoenolpyruvate</name>
        <dbReference type="ChEBI" id="CHEBI:58702"/>
    </ligand>
</feature>
<feature type="binding site" evidence="1">
    <location>
        <position position="198"/>
    </location>
    <ligand>
        <name>3-phosphoshikimate</name>
        <dbReference type="ChEBI" id="CHEBI:145989"/>
    </ligand>
</feature>
<feature type="binding site" evidence="1">
    <location>
        <position position="314"/>
    </location>
    <ligand>
        <name>3-phosphoshikimate</name>
        <dbReference type="ChEBI" id="CHEBI:145989"/>
    </ligand>
</feature>
<feature type="binding site" evidence="1">
    <location>
        <position position="337"/>
    </location>
    <ligand>
        <name>3-phosphoshikimate</name>
        <dbReference type="ChEBI" id="CHEBI:145989"/>
    </ligand>
</feature>
<feature type="binding site" evidence="1">
    <location>
        <position position="341"/>
    </location>
    <ligand>
        <name>3-phosphoshikimate</name>
        <dbReference type="ChEBI" id="CHEBI:145989"/>
    </ligand>
</feature>
<feature type="binding site" evidence="1">
    <location>
        <position position="345"/>
    </location>
    <ligand>
        <name>phosphoenolpyruvate</name>
        <dbReference type="ChEBI" id="CHEBI:58702"/>
    </ligand>
</feature>
<feature type="binding site" evidence="1">
    <location>
        <position position="387"/>
    </location>
    <ligand>
        <name>phosphoenolpyruvate</name>
        <dbReference type="ChEBI" id="CHEBI:58702"/>
    </ligand>
</feature>
<feature type="binding site" evidence="1">
    <location>
        <position position="412"/>
    </location>
    <ligand>
        <name>phosphoenolpyruvate</name>
        <dbReference type="ChEBI" id="CHEBI:58702"/>
    </ligand>
</feature>
<accession>A8FVN6</accession>